<proteinExistence type="evidence at transcript level"/>
<comment type="catalytic activity">
    <reaction>
        <text>3-(4-hydroxyphenyl)pyruvate + O2 = homogentisate + CO2</text>
        <dbReference type="Rhea" id="RHEA:16189"/>
        <dbReference type="ChEBI" id="CHEBI:15379"/>
        <dbReference type="ChEBI" id="CHEBI:16169"/>
        <dbReference type="ChEBI" id="CHEBI:16526"/>
        <dbReference type="ChEBI" id="CHEBI:36242"/>
        <dbReference type="EC" id="1.13.11.27"/>
    </reaction>
</comment>
<comment type="cofactor">
    <cofactor evidence="1">
        <name>Fe cation</name>
        <dbReference type="ChEBI" id="CHEBI:24875"/>
    </cofactor>
    <text evidence="1">Binds 1 Fe cation per subunit.</text>
</comment>
<comment type="pathway">
    <text>Amino-acid degradation; L-phenylalanine degradation; acetoacetate and fumarate from L-phenylalanine: step 3/6.</text>
</comment>
<comment type="pathway">
    <text>Cofactor biosynthesis; prenylquinone biosynthesis.</text>
</comment>
<comment type="subcellular location">
    <subcellularLocation>
        <location evidence="1">Cytoplasm</location>
    </subcellularLocation>
</comment>
<comment type="similarity">
    <text evidence="4">Belongs to the 4HPPD family.</text>
</comment>
<feature type="chain" id="PRO_0000088399" description="4-hydroxyphenylpyruvate dioxygenase">
    <location>
        <begin position="1"/>
        <end position="434"/>
    </location>
</feature>
<feature type="domain" description="VOC 1" evidence="2">
    <location>
        <begin position="41"/>
        <end position="192"/>
    </location>
</feature>
<feature type="domain" description="VOC 2" evidence="2">
    <location>
        <begin position="208"/>
        <end position="368"/>
    </location>
</feature>
<feature type="region of interest" description="Disordered" evidence="3">
    <location>
        <begin position="1"/>
        <end position="21"/>
    </location>
</feature>
<feature type="compositionally biased region" description="Low complexity" evidence="3">
    <location>
        <begin position="7"/>
        <end position="19"/>
    </location>
</feature>
<feature type="binding site" evidence="1">
    <location>
        <position position="211"/>
    </location>
    <ligand>
        <name>Fe cation</name>
        <dbReference type="ChEBI" id="CHEBI:24875"/>
    </ligand>
</feature>
<feature type="binding site" evidence="1">
    <location>
        <position position="293"/>
    </location>
    <ligand>
        <name>Fe cation</name>
        <dbReference type="ChEBI" id="CHEBI:24875"/>
    </ligand>
</feature>
<feature type="binding site" evidence="1">
    <location>
        <position position="379"/>
    </location>
    <ligand>
        <name>Fe cation</name>
        <dbReference type="ChEBI" id="CHEBI:24875"/>
    </ligand>
</feature>
<name>HPPD_HORVU</name>
<evidence type="ECO:0000250" key="1"/>
<evidence type="ECO:0000255" key="2">
    <source>
        <dbReference type="PROSITE-ProRule" id="PRU01163"/>
    </source>
</evidence>
<evidence type="ECO:0000256" key="3">
    <source>
        <dbReference type="SAM" id="MobiDB-lite"/>
    </source>
</evidence>
<evidence type="ECO:0000305" key="4"/>
<protein>
    <recommendedName>
        <fullName>4-hydroxyphenylpyruvate dioxygenase</fullName>
        <ecNumber>1.13.11.27</ecNumber>
    </recommendedName>
    <alternativeName>
        <fullName>4-hydroxyphenylpyruvic acid oxidase</fullName>
        <shortName>4HPPD</shortName>
        <shortName>HPD</shortName>
        <shortName>HPPDase</shortName>
    </alternativeName>
</protein>
<accession>O48604</accession>
<reference key="1">
    <citation type="submission" date="1997-12" db="EMBL/GenBank/DDBJ databases">
        <title>cDNA sequence encoding a barley 4-hydroxyphenylpyruvate dioxygenase with enhanced expression in meristematic leaf tissue and during leaf senescence.</title>
        <authorList>
            <person name="Krupinska K."/>
            <person name="Falk J."/>
        </authorList>
    </citation>
    <scope>NUCLEOTIDE SEQUENCE [MRNA]</scope>
    <source>
        <strain>cv. Carina</strain>
        <tissue>Meristem</tissue>
    </source>
</reference>
<dbReference type="EC" id="1.13.11.27"/>
<dbReference type="EMBL" id="AJ000693">
    <property type="protein sequence ID" value="CAA04245.1"/>
    <property type="molecule type" value="mRNA"/>
</dbReference>
<dbReference type="PIR" id="T04471">
    <property type="entry name" value="T04471"/>
</dbReference>
<dbReference type="SMR" id="O48604"/>
<dbReference type="BRENDA" id="1.13.11.27">
    <property type="organism ID" value="2687"/>
</dbReference>
<dbReference type="UniPathway" id="UPA00139">
    <property type="reaction ID" value="UER00362"/>
</dbReference>
<dbReference type="UniPathway" id="UPA00975"/>
<dbReference type="ExpressionAtlas" id="O48604">
    <property type="expression patterns" value="baseline and differential"/>
</dbReference>
<dbReference type="GO" id="GO:0005737">
    <property type="term" value="C:cytoplasm"/>
    <property type="evidence" value="ECO:0007669"/>
    <property type="project" value="UniProtKB-SubCell"/>
</dbReference>
<dbReference type="GO" id="GO:0003868">
    <property type="term" value="F:4-hydroxyphenylpyruvate dioxygenase activity"/>
    <property type="evidence" value="ECO:0007669"/>
    <property type="project" value="UniProtKB-EC"/>
</dbReference>
<dbReference type="GO" id="GO:0046872">
    <property type="term" value="F:metal ion binding"/>
    <property type="evidence" value="ECO:0007669"/>
    <property type="project" value="UniProtKB-KW"/>
</dbReference>
<dbReference type="GO" id="GO:0006559">
    <property type="term" value="P:L-phenylalanine catabolic process"/>
    <property type="evidence" value="ECO:0007669"/>
    <property type="project" value="UniProtKB-UniPathway"/>
</dbReference>
<dbReference type="GO" id="GO:0006572">
    <property type="term" value="P:tyrosine catabolic process"/>
    <property type="evidence" value="ECO:0007669"/>
    <property type="project" value="UniProtKB-KW"/>
</dbReference>
<dbReference type="CDD" id="cd07250">
    <property type="entry name" value="HPPD_C_like"/>
    <property type="match status" value="1"/>
</dbReference>
<dbReference type="CDD" id="cd08342">
    <property type="entry name" value="HPPD_N_like"/>
    <property type="match status" value="1"/>
</dbReference>
<dbReference type="FunFam" id="3.10.180.10:FF:000013">
    <property type="entry name" value="4-hydroxyphenylpyruvate dioxygenase"/>
    <property type="match status" value="1"/>
</dbReference>
<dbReference type="FunFam" id="3.10.180.10:FF:000025">
    <property type="entry name" value="4-hydroxyphenylpyruvate dioxygenase"/>
    <property type="match status" value="1"/>
</dbReference>
<dbReference type="Gene3D" id="3.10.180.10">
    <property type="entry name" value="2,3-Dihydroxybiphenyl 1,2-Dioxygenase, domain 1"/>
    <property type="match status" value="2"/>
</dbReference>
<dbReference type="InterPro" id="IPR005956">
    <property type="entry name" value="4OHPhenylPyrv_dOase"/>
</dbReference>
<dbReference type="InterPro" id="IPR041735">
    <property type="entry name" value="4OHPhenylPyrv_dOase_C"/>
</dbReference>
<dbReference type="InterPro" id="IPR041736">
    <property type="entry name" value="4OHPhenylPyrv_dOase_N"/>
</dbReference>
<dbReference type="InterPro" id="IPR029068">
    <property type="entry name" value="Glyas_Bleomycin-R_OHBP_Dase"/>
</dbReference>
<dbReference type="InterPro" id="IPR004360">
    <property type="entry name" value="Glyas_Fos-R_dOase_dom"/>
</dbReference>
<dbReference type="InterPro" id="IPR037523">
    <property type="entry name" value="VOC"/>
</dbReference>
<dbReference type="NCBIfam" id="TIGR01263">
    <property type="entry name" value="4HPPD"/>
    <property type="match status" value="1"/>
</dbReference>
<dbReference type="PANTHER" id="PTHR11959">
    <property type="entry name" value="4-HYDROXYPHENYLPYRUVATE DIOXYGENASE"/>
    <property type="match status" value="1"/>
</dbReference>
<dbReference type="PANTHER" id="PTHR11959:SF1">
    <property type="entry name" value="4-HYDROXYPHENYLPYRUVATE DIOXYGENASE"/>
    <property type="match status" value="1"/>
</dbReference>
<dbReference type="Pfam" id="PF00903">
    <property type="entry name" value="Glyoxalase"/>
    <property type="match status" value="1"/>
</dbReference>
<dbReference type="PIRSF" id="PIRSF009283">
    <property type="entry name" value="HPP_dOase"/>
    <property type="match status" value="1"/>
</dbReference>
<dbReference type="SUPFAM" id="SSF54593">
    <property type="entry name" value="Glyoxalase/Bleomycin resistance protein/Dihydroxybiphenyl dioxygenase"/>
    <property type="match status" value="1"/>
</dbReference>
<dbReference type="PROSITE" id="PS51819">
    <property type="entry name" value="VOC"/>
    <property type="match status" value="2"/>
</dbReference>
<sequence>MPPTPTTPAATGAAAAVTPEHARPHRMVRFNPRSDRFHTLSFHHVEFWCADAASAAGRFAFALGAPLAARSDLSTGNSAHASQLLRSGSLAFLFTAPYANGCDAATASLPSFSADAARRFSADHGIAVRSVALRVADAAEAFRASRRRGARPAFAPVDLGRGFAFAEVELYGDVVLRFVSHPDGTDVPFLPGFEGVTNPDAVDYGLTRFDHVVGNVPELAPAAAYIAGFTGFHEFAEFTAEDVGTTESGLNSVVLANNSEGVLLPLNEPVHGTKRRSQIQTFLEHHGGPGVQHIAVASSDVLRTLRKMRARSAMGGFDFLPPPLPKYYEGVRRLAGDVLSEAQIKECQELGVLVDRDDQGVLLQIFTKPVGDRPTLFLEMIQRIGCMEKDERGEEYQKGGCGGFGKGNFSELFKSIEDYEKSLEAKQSAAVQGS</sequence>
<keyword id="KW-0963">Cytoplasm</keyword>
<keyword id="KW-0223">Dioxygenase</keyword>
<keyword id="KW-0408">Iron</keyword>
<keyword id="KW-0479">Metal-binding</keyword>
<keyword id="KW-0560">Oxidoreductase</keyword>
<keyword id="KW-0585">Phenylalanine catabolism</keyword>
<keyword id="KW-0677">Repeat</keyword>
<keyword id="KW-0828">Tyrosine catabolism</keyword>
<organism>
    <name type="scientific">Hordeum vulgare</name>
    <name type="common">Barley</name>
    <dbReference type="NCBI Taxonomy" id="4513"/>
    <lineage>
        <taxon>Eukaryota</taxon>
        <taxon>Viridiplantae</taxon>
        <taxon>Streptophyta</taxon>
        <taxon>Embryophyta</taxon>
        <taxon>Tracheophyta</taxon>
        <taxon>Spermatophyta</taxon>
        <taxon>Magnoliopsida</taxon>
        <taxon>Liliopsida</taxon>
        <taxon>Poales</taxon>
        <taxon>Poaceae</taxon>
        <taxon>BOP clade</taxon>
        <taxon>Pooideae</taxon>
        <taxon>Triticodae</taxon>
        <taxon>Triticeae</taxon>
        <taxon>Hordeinae</taxon>
        <taxon>Hordeum</taxon>
    </lineage>
</organism>